<dbReference type="EMBL" id="L42023">
    <property type="protein sequence ID" value="AAC22460.1"/>
    <property type="molecule type" value="Genomic_DNA"/>
</dbReference>
<dbReference type="PIR" id="A64095">
    <property type="entry name" value="A64095"/>
</dbReference>
<dbReference type="RefSeq" id="NP_438961.1">
    <property type="nucleotide sequence ID" value="NC_000907.1"/>
</dbReference>
<dbReference type="SMR" id="P44373"/>
<dbReference type="STRING" id="71421.HI_0801"/>
<dbReference type="EnsemblBacteria" id="AAC22460">
    <property type="protein sequence ID" value="AAC22460"/>
    <property type="gene ID" value="HI_0801"/>
</dbReference>
<dbReference type="KEGG" id="hin:HI_0801"/>
<dbReference type="PATRIC" id="fig|71421.8.peg.841"/>
<dbReference type="eggNOG" id="COG0522">
    <property type="taxonomic scope" value="Bacteria"/>
</dbReference>
<dbReference type="HOGENOM" id="CLU_092403_0_2_6"/>
<dbReference type="OrthoDB" id="9803672at2"/>
<dbReference type="PhylomeDB" id="P44373"/>
<dbReference type="BioCyc" id="HINF71421:G1GJ1-842-MONOMER"/>
<dbReference type="Proteomes" id="UP000000579">
    <property type="component" value="Chromosome"/>
</dbReference>
<dbReference type="GO" id="GO:0015935">
    <property type="term" value="C:small ribosomal subunit"/>
    <property type="evidence" value="ECO:0000318"/>
    <property type="project" value="GO_Central"/>
</dbReference>
<dbReference type="GO" id="GO:0019843">
    <property type="term" value="F:rRNA binding"/>
    <property type="evidence" value="ECO:0000318"/>
    <property type="project" value="GO_Central"/>
</dbReference>
<dbReference type="GO" id="GO:0003735">
    <property type="term" value="F:structural constituent of ribosome"/>
    <property type="evidence" value="ECO:0000318"/>
    <property type="project" value="GO_Central"/>
</dbReference>
<dbReference type="GO" id="GO:0042274">
    <property type="term" value="P:ribosomal small subunit biogenesis"/>
    <property type="evidence" value="ECO:0000318"/>
    <property type="project" value="GO_Central"/>
</dbReference>
<dbReference type="GO" id="GO:0006412">
    <property type="term" value="P:translation"/>
    <property type="evidence" value="ECO:0007669"/>
    <property type="project" value="UniProtKB-UniRule"/>
</dbReference>
<dbReference type="CDD" id="cd00165">
    <property type="entry name" value="S4"/>
    <property type="match status" value="1"/>
</dbReference>
<dbReference type="FunFam" id="1.10.1050.10:FF:000001">
    <property type="entry name" value="30S ribosomal protein S4"/>
    <property type="match status" value="1"/>
</dbReference>
<dbReference type="FunFam" id="3.10.290.10:FF:000001">
    <property type="entry name" value="30S ribosomal protein S4"/>
    <property type="match status" value="1"/>
</dbReference>
<dbReference type="Gene3D" id="1.10.1050.10">
    <property type="entry name" value="Ribosomal Protein S4 Delta 41, Chain A, domain 1"/>
    <property type="match status" value="1"/>
</dbReference>
<dbReference type="Gene3D" id="3.10.290.10">
    <property type="entry name" value="RNA-binding S4 domain"/>
    <property type="match status" value="1"/>
</dbReference>
<dbReference type="HAMAP" id="MF_01306_B">
    <property type="entry name" value="Ribosomal_uS4_B"/>
    <property type="match status" value="1"/>
</dbReference>
<dbReference type="InterPro" id="IPR022801">
    <property type="entry name" value="Ribosomal_uS4"/>
</dbReference>
<dbReference type="InterPro" id="IPR005709">
    <property type="entry name" value="Ribosomal_uS4_bac-type"/>
</dbReference>
<dbReference type="InterPro" id="IPR018079">
    <property type="entry name" value="Ribosomal_uS4_CS"/>
</dbReference>
<dbReference type="InterPro" id="IPR001912">
    <property type="entry name" value="Ribosomal_uS4_N"/>
</dbReference>
<dbReference type="InterPro" id="IPR002942">
    <property type="entry name" value="S4_RNA-bd"/>
</dbReference>
<dbReference type="InterPro" id="IPR036986">
    <property type="entry name" value="S4_RNA-bd_sf"/>
</dbReference>
<dbReference type="NCBIfam" id="NF003717">
    <property type="entry name" value="PRK05327.1"/>
    <property type="match status" value="1"/>
</dbReference>
<dbReference type="NCBIfam" id="TIGR01017">
    <property type="entry name" value="rpsD_bact"/>
    <property type="match status" value="1"/>
</dbReference>
<dbReference type="PANTHER" id="PTHR11831">
    <property type="entry name" value="30S 40S RIBOSOMAL PROTEIN"/>
    <property type="match status" value="1"/>
</dbReference>
<dbReference type="PANTHER" id="PTHR11831:SF4">
    <property type="entry name" value="SMALL RIBOSOMAL SUBUNIT PROTEIN US4M"/>
    <property type="match status" value="1"/>
</dbReference>
<dbReference type="Pfam" id="PF00163">
    <property type="entry name" value="Ribosomal_S4"/>
    <property type="match status" value="1"/>
</dbReference>
<dbReference type="Pfam" id="PF01479">
    <property type="entry name" value="S4"/>
    <property type="match status" value="1"/>
</dbReference>
<dbReference type="SMART" id="SM01390">
    <property type="entry name" value="Ribosomal_S4"/>
    <property type="match status" value="1"/>
</dbReference>
<dbReference type="SMART" id="SM00363">
    <property type="entry name" value="S4"/>
    <property type="match status" value="1"/>
</dbReference>
<dbReference type="SUPFAM" id="SSF55174">
    <property type="entry name" value="Alpha-L RNA-binding motif"/>
    <property type="match status" value="1"/>
</dbReference>
<dbReference type="PROSITE" id="PS00632">
    <property type="entry name" value="RIBOSOMAL_S4"/>
    <property type="match status" value="1"/>
</dbReference>
<dbReference type="PROSITE" id="PS50889">
    <property type="entry name" value="S4"/>
    <property type="match status" value="1"/>
</dbReference>
<accession>P44373</accession>
<protein>
    <recommendedName>
        <fullName evidence="2">Small ribosomal subunit protein uS4</fullName>
    </recommendedName>
    <alternativeName>
        <fullName evidence="3">30S ribosomal protein S4</fullName>
    </alternativeName>
</protein>
<reference key="1">
    <citation type="journal article" date="1995" name="Science">
        <title>Whole-genome random sequencing and assembly of Haemophilus influenzae Rd.</title>
        <authorList>
            <person name="Fleischmann R.D."/>
            <person name="Adams M.D."/>
            <person name="White O."/>
            <person name="Clayton R.A."/>
            <person name="Kirkness E.F."/>
            <person name="Kerlavage A.R."/>
            <person name="Bult C.J."/>
            <person name="Tomb J.-F."/>
            <person name="Dougherty B.A."/>
            <person name="Merrick J.M."/>
            <person name="McKenney K."/>
            <person name="Sutton G.G."/>
            <person name="FitzHugh W."/>
            <person name="Fields C.A."/>
            <person name="Gocayne J.D."/>
            <person name="Scott J.D."/>
            <person name="Shirley R."/>
            <person name="Liu L.-I."/>
            <person name="Glodek A."/>
            <person name="Kelley J.M."/>
            <person name="Weidman J.F."/>
            <person name="Phillips C.A."/>
            <person name="Spriggs T."/>
            <person name="Hedblom E."/>
            <person name="Cotton M.D."/>
            <person name="Utterback T.R."/>
            <person name="Hanna M.C."/>
            <person name="Nguyen D.T."/>
            <person name="Saudek D.M."/>
            <person name="Brandon R.C."/>
            <person name="Fine L.D."/>
            <person name="Fritchman J.L."/>
            <person name="Fuhrmann J.L."/>
            <person name="Geoghagen N.S.M."/>
            <person name="Gnehm C.L."/>
            <person name="McDonald L.A."/>
            <person name="Small K.V."/>
            <person name="Fraser C.M."/>
            <person name="Smith H.O."/>
            <person name="Venter J.C."/>
        </authorList>
    </citation>
    <scope>NUCLEOTIDE SEQUENCE [LARGE SCALE GENOMIC DNA]</scope>
    <source>
        <strain>ATCC 51907 / DSM 11121 / KW20 / Rd</strain>
    </source>
</reference>
<feature type="initiator methionine" description="Removed" evidence="1">
    <location>
        <position position="1"/>
    </location>
</feature>
<feature type="chain" id="PRO_0000132391" description="Small ribosomal subunit protein uS4">
    <location>
        <begin position="2"/>
        <end position="206"/>
    </location>
</feature>
<feature type="domain" description="S4 RNA-binding" evidence="2">
    <location>
        <begin position="96"/>
        <end position="156"/>
    </location>
</feature>
<keyword id="KW-1185">Reference proteome</keyword>
<keyword id="KW-0687">Ribonucleoprotein</keyword>
<keyword id="KW-0689">Ribosomal protein</keyword>
<keyword id="KW-0694">RNA-binding</keyword>
<keyword id="KW-0699">rRNA-binding</keyword>
<proteinExistence type="inferred from homology"/>
<sequence length="206" mass="23524">MARYLGPKLKLSRREGTDLFLKSGVRAIDSKCKIDTAPGQHGARKPRLSDYGSQLREKQKVRRIYGILERQFRNYYKEANRLKGNTGENLLVLLEGRLDNVVYRMGFATTRAEARQLVSHKAIVVNGRVVNIPSFQVSVNDVVAIREKSKKQARIKASLELAEQREKPTWLEVDSAKMEGVFKRVPERSDLSADINEHLIVELYSK</sequence>
<comment type="function">
    <text evidence="2">One of the primary rRNA binding proteins, it binds directly to 16S rRNA where it nucleates assembly of the body of the 30S subunit.</text>
</comment>
<comment type="function">
    <text evidence="2">With S5 and S12 plays an important role in translational accuracy.</text>
</comment>
<comment type="subunit">
    <text evidence="2">Part of the 30S ribosomal subunit. Contacts protein S5. The interaction surface between S4 and S5 is involved in control of translational fidelity.</text>
</comment>
<comment type="similarity">
    <text evidence="2">Belongs to the universal ribosomal protein uS4 family.</text>
</comment>
<gene>
    <name evidence="2" type="primary">rpsD</name>
    <name evidence="2" type="synonym">rps4</name>
    <name type="ordered locus">HI_0801</name>
</gene>
<evidence type="ECO:0000250" key="1"/>
<evidence type="ECO:0000255" key="2">
    <source>
        <dbReference type="HAMAP-Rule" id="MF_01306"/>
    </source>
</evidence>
<evidence type="ECO:0000305" key="3"/>
<name>RS4_HAEIN</name>
<organism>
    <name type="scientific">Haemophilus influenzae (strain ATCC 51907 / DSM 11121 / KW20 / Rd)</name>
    <dbReference type="NCBI Taxonomy" id="71421"/>
    <lineage>
        <taxon>Bacteria</taxon>
        <taxon>Pseudomonadati</taxon>
        <taxon>Pseudomonadota</taxon>
        <taxon>Gammaproteobacteria</taxon>
        <taxon>Pasteurellales</taxon>
        <taxon>Pasteurellaceae</taxon>
        <taxon>Haemophilus</taxon>
    </lineage>
</organism>